<sequence>MNDTIPATGHLLGAADIRRIAADAGISPTKKFGQNFVIDPGTVRRIVREAGVTAADHVMEVGPGLGSLTLAILETGATMTAVEIDPPLAERLPGTVAEFMPEATSRLTVVNRDALTVTPENVPDFSDDASFTLVANLPYNVATPILLTLLERFDNLGSFLVMVQKEVADRLAAKPGSKIYGTPSVKLAWYGTAERVGTIGRNVFWPAPNVDSALVKFTRYQADDPAAPGTANSTDDGTQRELVFRLIDAAFGQRRKTLHAALKTIAPSEAFSIAGIDPTRRGETLTIAEFTALAKAIESCGDGDEAQ</sequence>
<gene>
    <name evidence="1" type="primary">rsmA</name>
    <name evidence="1" type="synonym">ksgA</name>
    <name type="ordered locus">Blon_2484</name>
    <name type="ordered locus">BLIJ_2556</name>
</gene>
<name>RSMA_BIFLS</name>
<evidence type="ECO:0000255" key="1">
    <source>
        <dbReference type="HAMAP-Rule" id="MF_00607"/>
    </source>
</evidence>
<protein>
    <recommendedName>
        <fullName evidence="1">Ribosomal RNA small subunit methyltransferase A</fullName>
        <ecNumber evidence="1">2.1.1.182</ecNumber>
    </recommendedName>
    <alternativeName>
        <fullName evidence="1">16S rRNA (adenine(1518)-N(6)/adenine(1519)-N(6))-dimethyltransferase</fullName>
    </alternativeName>
    <alternativeName>
        <fullName evidence="1">16S rRNA dimethyladenosine transferase</fullName>
    </alternativeName>
    <alternativeName>
        <fullName evidence="1">16S rRNA dimethylase</fullName>
    </alternativeName>
    <alternativeName>
        <fullName evidence="1">S-adenosylmethionine-6-N', N'-adenosyl(rRNA) dimethyltransferase</fullName>
    </alternativeName>
</protein>
<keyword id="KW-0963">Cytoplasm</keyword>
<keyword id="KW-0489">Methyltransferase</keyword>
<keyword id="KW-0694">RNA-binding</keyword>
<keyword id="KW-0698">rRNA processing</keyword>
<keyword id="KW-0949">S-adenosyl-L-methionine</keyword>
<keyword id="KW-0808">Transferase</keyword>
<dbReference type="EC" id="2.1.1.182" evidence="1"/>
<dbReference type="EMBL" id="CP001095">
    <property type="protein sequence ID" value="ACJ53538.1"/>
    <property type="molecule type" value="Genomic_DNA"/>
</dbReference>
<dbReference type="EMBL" id="AP010889">
    <property type="protein sequence ID" value="BAJ70133.1"/>
    <property type="molecule type" value="Genomic_DNA"/>
</dbReference>
<dbReference type="RefSeq" id="WP_007051794.1">
    <property type="nucleotide sequence ID" value="NZ_JDTT01000013.1"/>
</dbReference>
<dbReference type="SMR" id="B7GPE3"/>
<dbReference type="KEGG" id="bln:Blon_2484"/>
<dbReference type="KEGG" id="blon:BLIJ_2556"/>
<dbReference type="PATRIC" id="fig|391904.8.peg.2559"/>
<dbReference type="HOGENOM" id="CLU_041220_1_1_11"/>
<dbReference type="Proteomes" id="UP000001360">
    <property type="component" value="Chromosome"/>
</dbReference>
<dbReference type="GO" id="GO:0005829">
    <property type="term" value="C:cytosol"/>
    <property type="evidence" value="ECO:0007669"/>
    <property type="project" value="TreeGrafter"/>
</dbReference>
<dbReference type="GO" id="GO:0052908">
    <property type="term" value="F:16S rRNA (adenine(1518)-N(6)/adenine(1519)-N(6))-dimethyltransferase activity"/>
    <property type="evidence" value="ECO:0007669"/>
    <property type="project" value="UniProtKB-EC"/>
</dbReference>
<dbReference type="GO" id="GO:0003723">
    <property type="term" value="F:RNA binding"/>
    <property type="evidence" value="ECO:0007669"/>
    <property type="project" value="UniProtKB-KW"/>
</dbReference>
<dbReference type="FunFam" id="3.40.50.150:FF:000023">
    <property type="entry name" value="Ribosomal RNA small subunit methyltransferase A"/>
    <property type="match status" value="1"/>
</dbReference>
<dbReference type="Gene3D" id="1.10.8.100">
    <property type="entry name" value="Ribosomal RNA adenine dimethylase-like, domain 2"/>
    <property type="match status" value="1"/>
</dbReference>
<dbReference type="Gene3D" id="3.40.50.150">
    <property type="entry name" value="Vaccinia Virus protein VP39"/>
    <property type="match status" value="1"/>
</dbReference>
<dbReference type="HAMAP" id="MF_00607">
    <property type="entry name" value="16SrRNA_methyltr_A"/>
    <property type="match status" value="1"/>
</dbReference>
<dbReference type="InterPro" id="IPR001737">
    <property type="entry name" value="KsgA/Erm"/>
</dbReference>
<dbReference type="InterPro" id="IPR023165">
    <property type="entry name" value="rRNA_Ade_diMease-like_C"/>
</dbReference>
<dbReference type="InterPro" id="IPR020596">
    <property type="entry name" value="rRNA_Ade_Mease_Trfase_CS"/>
</dbReference>
<dbReference type="InterPro" id="IPR020598">
    <property type="entry name" value="rRNA_Ade_methylase_Trfase_N"/>
</dbReference>
<dbReference type="InterPro" id="IPR011530">
    <property type="entry name" value="rRNA_adenine_dimethylase"/>
</dbReference>
<dbReference type="InterPro" id="IPR029063">
    <property type="entry name" value="SAM-dependent_MTases_sf"/>
</dbReference>
<dbReference type="NCBIfam" id="TIGR00755">
    <property type="entry name" value="ksgA"/>
    <property type="match status" value="1"/>
</dbReference>
<dbReference type="PANTHER" id="PTHR11727">
    <property type="entry name" value="DIMETHYLADENOSINE TRANSFERASE"/>
    <property type="match status" value="1"/>
</dbReference>
<dbReference type="PANTHER" id="PTHR11727:SF7">
    <property type="entry name" value="DIMETHYLADENOSINE TRANSFERASE-RELATED"/>
    <property type="match status" value="1"/>
</dbReference>
<dbReference type="Pfam" id="PF00398">
    <property type="entry name" value="RrnaAD"/>
    <property type="match status" value="1"/>
</dbReference>
<dbReference type="SMART" id="SM00650">
    <property type="entry name" value="rADc"/>
    <property type="match status" value="1"/>
</dbReference>
<dbReference type="SUPFAM" id="SSF53335">
    <property type="entry name" value="S-adenosyl-L-methionine-dependent methyltransferases"/>
    <property type="match status" value="1"/>
</dbReference>
<dbReference type="PROSITE" id="PS01131">
    <property type="entry name" value="RRNA_A_DIMETH"/>
    <property type="match status" value="1"/>
</dbReference>
<dbReference type="PROSITE" id="PS51689">
    <property type="entry name" value="SAM_RNA_A_N6_MT"/>
    <property type="match status" value="1"/>
</dbReference>
<reference key="1">
    <citation type="journal article" date="2008" name="Proc. Natl. Acad. Sci. U.S.A.">
        <title>The genome sequence of Bifidobacterium longum subsp. infantis reveals adaptations for milk utilization within the infant microbiome.</title>
        <authorList>
            <person name="Sela D.A."/>
            <person name="Chapman J."/>
            <person name="Adeuya A."/>
            <person name="Kim J.H."/>
            <person name="Chen F."/>
            <person name="Whitehead T.R."/>
            <person name="Lapidus A."/>
            <person name="Rokhsar D.S."/>
            <person name="Lebrilla C.B."/>
            <person name="German J.B."/>
            <person name="Price N.P."/>
            <person name="Richardson P.M."/>
            <person name="Mills D.A."/>
        </authorList>
    </citation>
    <scope>NUCLEOTIDE SEQUENCE [LARGE SCALE GENOMIC DNA]</scope>
    <source>
        <strain>ATCC 15697 / DSM 20088 / JCM 1222 / NCTC 11817 / S12</strain>
    </source>
</reference>
<reference key="2">
    <citation type="journal article" date="2011" name="Nature">
        <title>Bifidobacteria can protect from enteropathogenic infection through production of acetate.</title>
        <authorList>
            <person name="Fukuda S."/>
            <person name="Toh H."/>
            <person name="Hase K."/>
            <person name="Oshima K."/>
            <person name="Nakanishi Y."/>
            <person name="Yoshimura K."/>
            <person name="Tobe T."/>
            <person name="Clarke J.M."/>
            <person name="Topping D.L."/>
            <person name="Suzuki T."/>
            <person name="Taylor T.D."/>
            <person name="Itoh K."/>
            <person name="Kikuchi J."/>
            <person name="Morita H."/>
            <person name="Hattori M."/>
            <person name="Ohno H."/>
        </authorList>
    </citation>
    <scope>NUCLEOTIDE SEQUENCE [LARGE SCALE GENOMIC DNA]</scope>
    <source>
        <strain>ATCC 15697 / DSM 20088 / JCM 1222 / NCTC 11817 / S12</strain>
    </source>
</reference>
<organism>
    <name type="scientific">Bifidobacterium longum subsp. infantis (strain ATCC 15697 / DSM 20088 / JCM 1222 / NCTC 11817 / S12)</name>
    <dbReference type="NCBI Taxonomy" id="391904"/>
    <lineage>
        <taxon>Bacteria</taxon>
        <taxon>Bacillati</taxon>
        <taxon>Actinomycetota</taxon>
        <taxon>Actinomycetes</taxon>
        <taxon>Bifidobacteriales</taxon>
        <taxon>Bifidobacteriaceae</taxon>
        <taxon>Bifidobacterium</taxon>
    </lineage>
</organism>
<feature type="chain" id="PRO_1000147126" description="Ribosomal RNA small subunit methyltransferase A">
    <location>
        <begin position="1"/>
        <end position="307"/>
    </location>
</feature>
<feature type="binding site" evidence="1">
    <location>
        <position position="35"/>
    </location>
    <ligand>
        <name>S-adenosyl-L-methionine</name>
        <dbReference type="ChEBI" id="CHEBI:59789"/>
    </ligand>
</feature>
<feature type="binding site" evidence="1">
    <location>
        <position position="37"/>
    </location>
    <ligand>
        <name>S-adenosyl-L-methionine</name>
        <dbReference type="ChEBI" id="CHEBI:59789"/>
    </ligand>
</feature>
<feature type="binding site" evidence="1">
    <location>
        <position position="62"/>
    </location>
    <ligand>
        <name>S-adenosyl-L-methionine</name>
        <dbReference type="ChEBI" id="CHEBI:59789"/>
    </ligand>
</feature>
<feature type="binding site" evidence="1">
    <location>
        <position position="83"/>
    </location>
    <ligand>
        <name>S-adenosyl-L-methionine</name>
        <dbReference type="ChEBI" id="CHEBI:59789"/>
    </ligand>
</feature>
<feature type="binding site" evidence="1">
    <location>
        <position position="113"/>
    </location>
    <ligand>
        <name>S-adenosyl-L-methionine</name>
        <dbReference type="ChEBI" id="CHEBI:59789"/>
    </ligand>
</feature>
<feature type="binding site" evidence="1">
    <location>
        <position position="136"/>
    </location>
    <ligand>
        <name>S-adenosyl-L-methionine</name>
        <dbReference type="ChEBI" id="CHEBI:59789"/>
    </ligand>
</feature>
<proteinExistence type="inferred from homology"/>
<accession>B7GPE3</accession>
<accession>E8MPQ4</accession>
<comment type="function">
    <text evidence="1">Specifically dimethylates two adjacent adenosines (A1518 and A1519) in the loop of a conserved hairpin near the 3'-end of 16S rRNA in the 30S particle. May play a critical role in biogenesis of 30S subunits.</text>
</comment>
<comment type="catalytic activity">
    <reaction evidence="1">
        <text>adenosine(1518)/adenosine(1519) in 16S rRNA + 4 S-adenosyl-L-methionine = N(6)-dimethyladenosine(1518)/N(6)-dimethyladenosine(1519) in 16S rRNA + 4 S-adenosyl-L-homocysteine + 4 H(+)</text>
        <dbReference type="Rhea" id="RHEA:19609"/>
        <dbReference type="Rhea" id="RHEA-COMP:10232"/>
        <dbReference type="Rhea" id="RHEA-COMP:10233"/>
        <dbReference type="ChEBI" id="CHEBI:15378"/>
        <dbReference type="ChEBI" id="CHEBI:57856"/>
        <dbReference type="ChEBI" id="CHEBI:59789"/>
        <dbReference type="ChEBI" id="CHEBI:74411"/>
        <dbReference type="ChEBI" id="CHEBI:74493"/>
        <dbReference type="EC" id="2.1.1.182"/>
    </reaction>
</comment>
<comment type="subcellular location">
    <subcellularLocation>
        <location evidence="1">Cytoplasm</location>
    </subcellularLocation>
</comment>
<comment type="similarity">
    <text evidence="1">Belongs to the class I-like SAM-binding methyltransferase superfamily. rRNA adenine N(6)-methyltransferase family. RsmA subfamily.</text>
</comment>